<protein>
    <recommendedName>
        <fullName evidence="1">Histidine--tRNA ligase</fullName>
        <ecNumber evidence="1">6.1.1.21</ecNumber>
    </recommendedName>
    <alternativeName>
        <fullName evidence="1">Histidyl-tRNA synthetase</fullName>
        <shortName evidence="1">HisRS</shortName>
    </alternativeName>
</protein>
<accession>B1XJ88</accession>
<sequence length="426" mass="47203">MATIQALRGTKDIFAPEIAYWQQVEAVVRDCLGRAMYQEIRTPIFEQTSLFERGIGEATDVVSKEMYSFTDRGDRPITLRPEGTAGAVRAYIERKLFAQGGVQRLWYTGPMFRYERPQAGRQRQFHQVGVEVLGSADPRADVEVMAIATEILQKLGLKNLSLQLNSVGNGGDRQRYREALVDYLTPFKADLDADSQERLERNPLRILDSKDQKTQEIAQNAPSILDYLGDDSKKHFDQVQSSLTALGIDYVLNPCLVRGLDYYTHTAFEIQSSDLGAQATVCGGGRYDGLVAELGGPETPAVGWAIGLERLVILLQQLGEASGPQLDFYLVSKGEQAEAAAVILAHKLRFAGFSVELDLSGSAFGKQFKRADRSGAIACLVLGDEEAVNQQVQLKWLQTKAQETLAQADLLGNLESWRQKMQQAKH</sequence>
<evidence type="ECO:0000255" key="1">
    <source>
        <dbReference type="HAMAP-Rule" id="MF_00127"/>
    </source>
</evidence>
<feature type="chain" id="PRO_1000095603" description="Histidine--tRNA ligase">
    <location>
        <begin position="1"/>
        <end position="426"/>
    </location>
</feature>
<dbReference type="EC" id="6.1.1.21" evidence="1"/>
<dbReference type="EMBL" id="CP000951">
    <property type="protein sequence ID" value="ACB00254.1"/>
    <property type="molecule type" value="Genomic_DNA"/>
</dbReference>
<dbReference type="RefSeq" id="WP_012307872.1">
    <property type="nucleotide sequence ID" value="NZ_JAHHPU010000006.1"/>
</dbReference>
<dbReference type="SMR" id="B1XJ88"/>
<dbReference type="STRING" id="32049.SYNPCC7002_A2275"/>
<dbReference type="KEGG" id="syp:SYNPCC7002_A2275"/>
<dbReference type="eggNOG" id="COG0124">
    <property type="taxonomic scope" value="Bacteria"/>
</dbReference>
<dbReference type="HOGENOM" id="CLU_025113_1_1_3"/>
<dbReference type="Proteomes" id="UP000001688">
    <property type="component" value="Chromosome"/>
</dbReference>
<dbReference type="GO" id="GO:0005737">
    <property type="term" value="C:cytoplasm"/>
    <property type="evidence" value="ECO:0007669"/>
    <property type="project" value="UniProtKB-SubCell"/>
</dbReference>
<dbReference type="GO" id="GO:0005524">
    <property type="term" value="F:ATP binding"/>
    <property type="evidence" value="ECO:0007669"/>
    <property type="project" value="UniProtKB-UniRule"/>
</dbReference>
<dbReference type="GO" id="GO:0004821">
    <property type="term" value="F:histidine-tRNA ligase activity"/>
    <property type="evidence" value="ECO:0007669"/>
    <property type="project" value="UniProtKB-UniRule"/>
</dbReference>
<dbReference type="GO" id="GO:0006427">
    <property type="term" value="P:histidyl-tRNA aminoacylation"/>
    <property type="evidence" value="ECO:0007669"/>
    <property type="project" value="UniProtKB-UniRule"/>
</dbReference>
<dbReference type="CDD" id="cd00773">
    <property type="entry name" value="HisRS-like_core"/>
    <property type="match status" value="1"/>
</dbReference>
<dbReference type="CDD" id="cd00859">
    <property type="entry name" value="HisRS_anticodon"/>
    <property type="match status" value="1"/>
</dbReference>
<dbReference type="FunFam" id="3.30.930.10:FF:000005">
    <property type="entry name" value="Histidine--tRNA ligase"/>
    <property type="match status" value="1"/>
</dbReference>
<dbReference type="Gene3D" id="3.40.50.800">
    <property type="entry name" value="Anticodon-binding domain"/>
    <property type="match status" value="1"/>
</dbReference>
<dbReference type="Gene3D" id="3.30.930.10">
    <property type="entry name" value="Bira Bifunctional Protein, Domain 2"/>
    <property type="match status" value="1"/>
</dbReference>
<dbReference type="HAMAP" id="MF_00127">
    <property type="entry name" value="His_tRNA_synth"/>
    <property type="match status" value="1"/>
</dbReference>
<dbReference type="InterPro" id="IPR006195">
    <property type="entry name" value="aa-tRNA-synth_II"/>
</dbReference>
<dbReference type="InterPro" id="IPR045864">
    <property type="entry name" value="aa-tRNA-synth_II/BPL/LPL"/>
</dbReference>
<dbReference type="InterPro" id="IPR004154">
    <property type="entry name" value="Anticodon-bd"/>
</dbReference>
<dbReference type="InterPro" id="IPR036621">
    <property type="entry name" value="Anticodon-bd_dom_sf"/>
</dbReference>
<dbReference type="InterPro" id="IPR015807">
    <property type="entry name" value="His-tRNA-ligase"/>
</dbReference>
<dbReference type="InterPro" id="IPR041715">
    <property type="entry name" value="HisRS-like_core"/>
</dbReference>
<dbReference type="InterPro" id="IPR004516">
    <property type="entry name" value="HisRS/HisZ"/>
</dbReference>
<dbReference type="InterPro" id="IPR033656">
    <property type="entry name" value="HisRS_anticodon"/>
</dbReference>
<dbReference type="NCBIfam" id="TIGR00442">
    <property type="entry name" value="hisS"/>
    <property type="match status" value="1"/>
</dbReference>
<dbReference type="PANTHER" id="PTHR43707:SF1">
    <property type="entry name" value="HISTIDINE--TRNA LIGASE, MITOCHONDRIAL-RELATED"/>
    <property type="match status" value="1"/>
</dbReference>
<dbReference type="PANTHER" id="PTHR43707">
    <property type="entry name" value="HISTIDYL-TRNA SYNTHETASE"/>
    <property type="match status" value="1"/>
</dbReference>
<dbReference type="Pfam" id="PF03129">
    <property type="entry name" value="HGTP_anticodon"/>
    <property type="match status" value="1"/>
</dbReference>
<dbReference type="Pfam" id="PF13393">
    <property type="entry name" value="tRNA-synt_His"/>
    <property type="match status" value="1"/>
</dbReference>
<dbReference type="PIRSF" id="PIRSF001549">
    <property type="entry name" value="His-tRNA_synth"/>
    <property type="match status" value="1"/>
</dbReference>
<dbReference type="SUPFAM" id="SSF52954">
    <property type="entry name" value="Class II aaRS ABD-related"/>
    <property type="match status" value="1"/>
</dbReference>
<dbReference type="SUPFAM" id="SSF55681">
    <property type="entry name" value="Class II aaRS and biotin synthetases"/>
    <property type="match status" value="1"/>
</dbReference>
<dbReference type="PROSITE" id="PS50862">
    <property type="entry name" value="AA_TRNA_LIGASE_II"/>
    <property type="match status" value="1"/>
</dbReference>
<name>SYH_PICP2</name>
<comment type="catalytic activity">
    <reaction evidence="1">
        <text>tRNA(His) + L-histidine + ATP = L-histidyl-tRNA(His) + AMP + diphosphate + H(+)</text>
        <dbReference type="Rhea" id="RHEA:17313"/>
        <dbReference type="Rhea" id="RHEA-COMP:9665"/>
        <dbReference type="Rhea" id="RHEA-COMP:9689"/>
        <dbReference type="ChEBI" id="CHEBI:15378"/>
        <dbReference type="ChEBI" id="CHEBI:30616"/>
        <dbReference type="ChEBI" id="CHEBI:33019"/>
        <dbReference type="ChEBI" id="CHEBI:57595"/>
        <dbReference type="ChEBI" id="CHEBI:78442"/>
        <dbReference type="ChEBI" id="CHEBI:78527"/>
        <dbReference type="ChEBI" id="CHEBI:456215"/>
        <dbReference type="EC" id="6.1.1.21"/>
    </reaction>
</comment>
<comment type="subunit">
    <text evidence="1">Homodimer.</text>
</comment>
<comment type="subcellular location">
    <subcellularLocation>
        <location evidence="1">Cytoplasm</location>
    </subcellularLocation>
</comment>
<comment type="similarity">
    <text evidence="1">Belongs to the class-II aminoacyl-tRNA synthetase family.</text>
</comment>
<organism>
    <name type="scientific">Picosynechococcus sp. (strain ATCC 27264 / PCC 7002 / PR-6)</name>
    <name type="common">Agmenellum quadruplicatum</name>
    <dbReference type="NCBI Taxonomy" id="32049"/>
    <lineage>
        <taxon>Bacteria</taxon>
        <taxon>Bacillati</taxon>
        <taxon>Cyanobacteriota</taxon>
        <taxon>Cyanophyceae</taxon>
        <taxon>Oscillatoriophycideae</taxon>
        <taxon>Chroococcales</taxon>
        <taxon>Geminocystaceae</taxon>
        <taxon>Picosynechococcus</taxon>
    </lineage>
</organism>
<gene>
    <name evidence="1" type="primary">hisS</name>
    <name type="ordered locus">SYNPCC7002_A2275</name>
</gene>
<proteinExistence type="inferred from homology"/>
<keyword id="KW-0030">Aminoacyl-tRNA synthetase</keyword>
<keyword id="KW-0067">ATP-binding</keyword>
<keyword id="KW-0963">Cytoplasm</keyword>
<keyword id="KW-0436">Ligase</keyword>
<keyword id="KW-0547">Nucleotide-binding</keyword>
<keyword id="KW-0648">Protein biosynthesis</keyword>
<keyword id="KW-1185">Reference proteome</keyword>
<reference key="1">
    <citation type="submission" date="2008-02" db="EMBL/GenBank/DDBJ databases">
        <title>Complete sequence of Synechococcus sp. PCC 7002.</title>
        <authorList>
            <person name="Li T."/>
            <person name="Zhao J."/>
            <person name="Zhao C."/>
            <person name="Liu Z."/>
            <person name="Zhao F."/>
            <person name="Marquardt J."/>
            <person name="Nomura C.T."/>
            <person name="Persson S."/>
            <person name="Detter J.C."/>
            <person name="Richardson P.M."/>
            <person name="Lanz C."/>
            <person name="Schuster S.C."/>
            <person name="Wang J."/>
            <person name="Li S."/>
            <person name="Huang X."/>
            <person name="Cai T."/>
            <person name="Yu Z."/>
            <person name="Luo J."/>
            <person name="Zhao J."/>
            <person name="Bryant D.A."/>
        </authorList>
    </citation>
    <scope>NUCLEOTIDE SEQUENCE [LARGE SCALE GENOMIC DNA]</scope>
    <source>
        <strain>ATCC 27264 / PCC 7002 / PR-6</strain>
    </source>
</reference>